<organism>
    <name type="scientific">Neisseria meningitidis serogroup B (strain ATCC BAA-335 / MC58)</name>
    <dbReference type="NCBI Taxonomy" id="122586"/>
    <lineage>
        <taxon>Bacteria</taxon>
        <taxon>Pseudomonadati</taxon>
        <taxon>Pseudomonadota</taxon>
        <taxon>Betaproteobacteria</taxon>
        <taxon>Neisseriales</taxon>
        <taxon>Neisseriaceae</taxon>
        <taxon>Neisseria</taxon>
    </lineage>
</organism>
<gene>
    <name type="ordered locus">NMB0681</name>
</gene>
<proteinExistence type="inferred from homology"/>
<reference key="1">
    <citation type="journal article" date="2000" name="Science">
        <title>Complete genome sequence of Neisseria meningitidis serogroup B strain MC58.</title>
        <authorList>
            <person name="Tettelin H."/>
            <person name="Saunders N.J."/>
            <person name="Heidelberg J.F."/>
            <person name="Jeffries A.C."/>
            <person name="Nelson K.E."/>
            <person name="Eisen J.A."/>
            <person name="Ketchum K.A."/>
            <person name="Hood D.W."/>
            <person name="Peden J.F."/>
            <person name="Dodson R.J."/>
            <person name="Nelson W.C."/>
            <person name="Gwinn M.L."/>
            <person name="DeBoy R.T."/>
            <person name="Peterson J.D."/>
            <person name="Hickey E.K."/>
            <person name="Haft D.H."/>
            <person name="Salzberg S.L."/>
            <person name="White O."/>
            <person name="Fleischmann R.D."/>
            <person name="Dougherty B.A."/>
            <person name="Mason T.M."/>
            <person name="Ciecko A."/>
            <person name="Parksey D.S."/>
            <person name="Blair E."/>
            <person name="Cittone H."/>
            <person name="Clark E.B."/>
            <person name="Cotton M.D."/>
            <person name="Utterback T.R."/>
            <person name="Khouri H.M."/>
            <person name="Qin H."/>
            <person name="Vamathevan J.J."/>
            <person name="Gill J."/>
            <person name="Scarlato V."/>
            <person name="Masignani V."/>
            <person name="Pizza M."/>
            <person name="Grandi G."/>
            <person name="Sun L."/>
            <person name="Smith H.O."/>
            <person name="Fraser C.M."/>
            <person name="Moxon E.R."/>
            <person name="Rappuoli R."/>
            <person name="Venter J.C."/>
        </authorList>
    </citation>
    <scope>NUCLEOTIDE SEQUENCE [LARGE SCALE GENOMIC DNA]</scope>
    <source>
        <strain>ATCC BAA-335 / MC58</strain>
    </source>
</reference>
<protein>
    <recommendedName>
        <fullName>Putative sulfur carrier protein NMB0681</fullName>
    </recommendedName>
</protein>
<feature type="chain" id="PRO_0000159074" description="Putative sulfur carrier protein NMB0681">
    <location>
        <begin position="1"/>
        <end position="74"/>
    </location>
</feature>
<feature type="active site" description="Cysteine persulfide intermediate" evidence="1">
    <location>
        <position position="13"/>
    </location>
</feature>
<dbReference type="EMBL" id="AE002098">
    <property type="protein sequence ID" value="AAF41099.1"/>
    <property type="molecule type" value="Genomic_DNA"/>
</dbReference>
<dbReference type="PIR" id="G81171">
    <property type="entry name" value="G81171"/>
</dbReference>
<dbReference type="RefSeq" id="NP_273723.1">
    <property type="nucleotide sequence ID" value="NC_003112.2"/>
</dbReference>
<dbReference type="RefSeq" id="WP_002222784.1">
    <property type="nucleotide sequence ID" value="NC_003112.2"/>
</dbReference>
<dbReference type="SMR" id="P67103"/>
<dbReference type="FunCoup" id="P67103">
    <property type="interactions" value="183"/>
</dbReference>
<dbReference type="STRING" id="122586.NMB0681"/>
<dbReference type="PaxDb" id="122586-NMB0681"/>
<dbReference type="KEGG" id="nme:NMB0681"/>
<dbReference type="PATRIC" id="fig|122586.8.peg.853"/>
<dbReference type="HOGENOM" id="CLU_165255_1_1_4"/>
<dbReference type="InParanoid" id="P67103"/>
<dbReference type="OrthoDB" id="9797551at2"/>
<dbReference type="Proteomes" id="UP000000425">
    <property type="component" value="Chromosome"/>
</dbReference>
<dbReference type="CDD" id="cd00291">
    <property type="entry name" value="SirA_YedF_YeeD"/>
    <property type="match status" value="1"/>
</dbReference>
<dbReference type="Gene3D" id="3.30.110.40">
    <property type="entry name" value="TusA-like domain"/>
    <property type="match status" value="1"/>
</dbReference>
<dbReference type="InterPro" id="IPR001455">
    <property type="entry name" value="TusA-like"/>
</dbReference>
<dbReference type="InterPro" id="IPR036868">
    <property type="entry name" value="TusA-like_sf"/>
</dbReference>
<dbReference type="PANTHER" id="PTHR33279">
    <property type="entry name" value="SULFUR CARRIER PROTEIN YEDF-RELATED"/>
    <property type="match status" value="1"/>
</dbReference>
<dbReference type="PANTHER" id="PTHR33279:SF6">
    <property type="entry name" value="SULFUR CARRIER PROTEIN YEDF-RELATED"/>
    <property type="match status" value="1"/>
</dbReference>
<dbReference type="Pfam" id="PF01206">
    <property type="entry name" value="TusA"/>
    <property type="match status" value="1"/>
</dbReference>
<dbReference type="SUPFAM" id="SSF64307">
    <property type="entry name" value="SirA-like"/>
    <property type="match status" value="1"/>
</dbReference>
<dbReference type="PROSITE" id="PS01148">
    <property type="entry name" value="UPF0033"/>
    <property type="match status" value="1"/>
</dbReference>
<comment type="similarity">
    <text evidence="2">Belongs to the sulfur carrier protein TusA family.</text>
</comment>
<accession>P67103</accession>
<accession>Q9JR98</accession>
<evidence type="ECO:0000250" key="1">
    <source>
        <dbReference type="UniProtKB" id="P0A890"/>
    </source>
</evidence>
<evidence type="ECO:0000305" key="2"/>
<sequence length="74" mass="7896">MNSETLDVTGLKCPLPILRAKKALAQMQQGDVLTVLATDGGAPGDFEAFCRQTGHVLLDASEQDGVFTLVVQHK</sequence>
<keyword id="KW-1185">Reference proteome</keyword>
<name>Y681_NEIMB</name>